<dbReference type="EC" id="3.1.26.11" evidence="1"/>
<dbReference type="EMBL" id="CP001615">
    <property type="protein sequence ID" value="ACQ69420.1"/>
    <property type="molecule type" value="Genomic_DNA"/>
</dbReference>
<dbReference type="RefSeq" id="WP_012726539.1">
    <property type="nucleotide sequence ID" value="NC_012673.1"/>
</dbReference>
<dbReference type="SMR" id="C4L3C2"/>
<dbReference type="STRING" id="360911.EAT1b_0488"/>
<dbReference type="KEGG" id="eat:EAT1b_0488"/>
<dbReference type="eggNOG" id="COG1234">
    <property type="taxonomic scope" value="Bacteria"/>
</dbReference>
<dbReference type="HOGENOM" id="CLU_031317_2_0_9"/>
<dbReference type="OrthoDB" id="9800940at2"/>
<dbReference type="Proteomes" id="UP000000716">
    <property type="component" value="Chromosome"/>
</dbReference>
<dbReference type="GO" id="GO:0042781">
    <property type="term" value="F:3'-tRNA processing endoribonuclease activity"/>
    <property type="evidence" value="ECO:0007669"/>
    <property type="project" value="UniProtKB-UniRule"/>
</dbReference>
<dbReference type="GO" id="GO:0008270">
    <property type="term" value="F:zinc ion binding"/>
    <property type="evidence" value="ECO:0007669"/>
    <property type="project" value="UniProtKB-UniRule"/>
</dbReference>
<dbReference type="CDD" id="cd07717">
    <property type="entry name" value="RNaseZ_ZiPD-like_MBL-fold"/>
    <property type="match status" value="1"/>
</dbReference>
<dbReference type="FunFam" id="3.60.15.10:FF:000002">
    <property type="entry name" value="Ribonuclease Z"/>
    <property type="match status" value="1"/>
</dbReference>
<dbReference type="Gene3D" id="3.60.15.10">
    <property type="entry name" value="Ribonuclease Z/Hydroxyacylglutathione hydrolase-like"/>
    <property type="match status" value="1"/>
</dbReference>
<dbReference type="HAMAP" id="MF_01818">
    <property type="entry name" value="RNase_Z_BN"/>
    <property type="match status" value="1"/>
</dbReference>
<dbReference type="InterPro" id="IPR001279">
    <property type="entry name" value="Metallo-B-lactamas"/>
</dbReference>
<dbReference type="InterPro" id="IPR036866">
    <property type="entry name" value="RibonucZ/Hydroxyglut_hydro"/>
</dbReference>
<dbReference type="InterPro" id="IPR013471">
    <property type="entry name" value="RNase_Z/BN"/>
</dbReference>
<dbReference type="NCBIfam" id="NF000801">
    <property type="entry name" value="PRK00055.1-3"/>
    <property type="match status" value="1"/>
</dbReference>
<dbReference type="NCBIfam" id="TIGR02651">
    <property type="entry name" value="RNase_Z"/>
    <property type="match status" value="1"/>
</dbReference>
<dbReference type="PANTHER" id="PTHR46018">
    <property type="entry name" value="ZINC PHOSPHODIESTERASE ELAC PROTEIN 1"/>
    <property type="match status" value="1"/>
</dbReference>
<dbReference type="PANTHER" id="PTHR46018:SF2">
    <property type="entry name" value="ZINC PHOSPHODIESTERASE ELAC PROTEIN 1"/>
    <property type="match status" value="1"/>
</dbReference>
<dbReference type="Pfam" id="PF00753">
    <property type="entry name" value="Lactamase_B"/>
    <property type="match status" value="1"/>
</dbReference>
<dbReference type="SUPFAM" id="SSF56281">
    <property type="entry name" value="Metallo-hydrolase/oxidoreductase"/>
    <property type="match status" value="1"/>
</dbReference>
<organism>
    <name type="scientific">Exiguobacterium sp. (strain ATCC BAA-1283 / AT1b)</name>
    <dbReference type="NCBI Taxonomy" id="360911"/>
    <lineage>
        <taxon>Bacteria</taxon>
        <taxon>Bacillati</taxon>
        <taxon>Bacillota</taxon>
        <taxon>Bacilli</taxon>
        <taxon>Bacillales</taxon>
        <taxon>Bacillales Family XII. Incertae Sedis</taxon>
        <taxon>Exiguobacterium</taxon>
    </lineage>
</organism>
<reference key="1">
    <citation type="journal article" date="2011" name="J. Bacteriol.">
        <title>Complete genome sequence of the Thermophilic Bacterium Exiguobacterium sp. AT1b.</title>
        <authorList>
            <person name="Vishnivetskaya T.A."/>
            <person name="Lucas S."/>
            <person name="Copeland A."/>
            <person name="Lapidus A."/>
            <person name="Glavina del Rio T."/>
            <person name="Dalin E."/>
            <person name="Tice H."/>
            <person name="Bruce D.C."/>
            <person name="Goodwin L.A."/>
            <person name="Pitluck S."/>
            <person name="Saunders E."/>
            <person name="Brettin T."/>
            <person name="Detter C."/>
            <person name="Han C."/>
            <person name="Larimer F."/>
            <person name="Land M.L."/>
            <person name="Hauser L.J."/>
            <person name="Kyrpides N.C."/>
            <person name="Ovchinnikova G."/>
            <person name="Kathariou S."/>
            <person name="Ramaley R.F."/>
            <person name="Rodrigues D.F."/>
            <person name="Hendrix C."/>
            <person name="Richardson P."/>
            <person name="Tiedje J.M."/>
        </authorList>
    </citation>
    <scope>NUCLEOTIDE SEQUENCE [LARGE SCALE GENOMIC DNA]</scope>
    <source>
        <strain>ATCC BAA-1283 / AT1b</strain>
    </source>
</reference>
<accession>C4L3C2</accession>
<sequence length="301" mass="33319">MKLQFLGTGSGMPSKQRNVSGLALDLSNVTWLIDCGEGTQHQMLYTKIKPRKVTAVWVTHLHGDHVFGLPGFLSTRSALDGTAPLTVYGPKGLKKWLEATLRVTGSHLGYELTVTEYSDGDTFIQDDHLVTVRKLEHRFPSFGFRIDGPEKPGMLRVDLVRELGVPSGPIYRTIKESDRFEFEGKWYDSKEYVTEPIPGKIVAILGDTIPCENARKLADGADLLVHEATFMEAEQALARKYGHSTTREATALANACAVGKLIVTHISARYVGREEEFVQEVVSDFPSSLVATDFLEYTVGD</sequence>
<name>RNZ_EXISA</name>
<evidence type="ECO:0000255" key="1">
    <source>
        <dbReference type="HAMAP-Rule" id="MF_01818"/>
    </source>
</evidence>
<protein>
    <recommendedName>
        <fullName evidence="1">Ribonuclease Z</fullName>
        <shortName evidence="1">RNase Z</shortName>
        <ecNumber evidence="1">3.1.26.11</ecNumber>
    </recommendedName>
    <alternativeName>
        <fullName evidence="1">tRNA 3 endonuclease</fullName>
    </alternativeName>
    <alternativeName>
        <fullName evidence="1">tRNase Z</fullName>
    </alternativeName>
</protein>
<gene>
    <name evidence="1" type="primary">rnz</name>
    <name type="ordered locus">EAT1b_0488</name>
</gene>
<comment type="function">
    <text evidence="1">Zinc phosphodiesterase, which displays some tRNA 3'-processing endonuclease activity. Probably involved in tRNA maturation, by removing a 3'-trailer from precursor tRNA.</text>
</comment>
<comment type="catalytic activity">
    <reaction evidence="1">
        <text>Endonucleolytic cleavage of RNA, removing extra 3' nucleotides from tRNA precursor, generating 3' termini of tRNAs. A 3'-hydroxy group is left at the tRNA terminus and a 5'-phosphoryl group is left at the trailer molecule.</text>
        <dbReference type="EC" id="3.1.26.11"/>
    </reaction>
</comment>
<comment type="cofactor">
    <cofactor evidence="1">
        <name>Zn(2+)</name>
        <dbReference type="ChEBI" id="CHEBI:29105"/>
    </cofactor>
    <text evidence="1">Binds 2 Zn(2+) ions.</text>
</comment>
<comment type="subunit">
    <text evidence="1">Homodimer.</text>
</comment>
<comment type="similarity">
    <text evidence="1">Belongs to the RNase Z family.</text>
</comment>
<proteinExistence type="inferred from homology"/>
<keyword id="KW-0255">Endonuclease</keyword>
<keyword id="KW-0378">Hydrolase</keyword>
<keyword id="KW-0479">Metal-binding</keyword>
<keyword id="KW-0540">Nuclease</keyword>
<keyword id="KW-0819">tRNA processing</keyword>
<keyword id="KW-0862">Zinc</keyword>
<feature type="chain" id="PRO_1000216008" description="Ribonuclease Z">
    <location>
        <begin position="1"/>
        <end position="301"/>
    </location>
</feature>
<feature type="active site" description="Proton acceptor" evidence="1">
    <location>
        <position position="64"/>
    </location>
</feature>
<feature type="binding site" evidence="1">
    <location>
        <position position="60"/>
    </location>
    <ligand>
        <name>Zn(2+)</name>
        <dbReference type="ChEBI" id="CHEBI:29105"/>
        <label>1</label>
        <note>catalytic</note>
    </ligand>
</feature>
<feature type="binding site" evidence="1">
    <location>
        <position position="62"/>
    </location>
    <ligand>
        <name>Zn(2+)</name>
        <dbReference type="ChEBI" id="CHEBI:29105"/>
        <label>1</label>
        <note>catalytic</note>
    </ligand>
</feature>
<feature type="binding site" evidence="1">
    <location>
        <position position="64"/>
    </location>
    <ligand>
        <name>Zn(2+)</name>
        <dbReference type="ChEBI" id="CHEBI:29105"/>
        <label>2</label>
        <note>catalytic</note>
    </ligand>
</feature>
<feature type="binding site" evidence="1">
    <location>
        <position position="65"/>
    </location>
    <ligand>
        <name>Zn(2+)</name>
        <dbReference type="ChEBI" id="CHEBI:29105"/>
        <label>2</label>
        <note>catalytic</note>
    </ligand>
</feature>
<feature type="binding site" evidence="1">
    <location>
        <position position="137"/>
    </location>
    <ligand>
        <name>Zn(2+)</name>
        <dbReference type="ChEBI" id="CHEBI:29105"/>
        <label>1</label>
        <note>catalytic</note>
    </ligand>
</feature>
<feature type="binding site" evidence="1">
    <location>
        <position position="207"/>
    </location>
    <ligand>
        <name>Zn(2+)</name>
        <dbReference type="ChEBI" id="CHEBI:29105"/>
        <label>1</label>
        <note>catalytic</note>
    </ligand>
</feature>
<feature type="binding site" evidence="1">
    <location>
        <position position="207"/>
    </location>
    <ligand>
        <name>Zn(2+)</name>
        <dbReference type="ChEBI" id="CHEBI:29105"/>
        <label>2</label>
        <note>catalytic</note>
    </ligand>
</feature>
<feature type="binding site" evidence="1">
    <location>
        <position position="265"/>
    </location>
    <ligand>
        <name>Zn(2+)</name>
        <dbReference type="ChEBI" id="CHEBI:29105"/>
        <label>2</label>
        <note>catalytic</note>
    </ligand>
</feature>